<name>SUB1_PLAVI</name>
<evidence type="ECO:0000250" key="1">
    <source>
        <dbReference type="UniProtKB" id="Q8I0V0"/>
    </source>
</evidence>
<evidence type="ECO:0000255" key="2"/>
<evidence type="ECO:0000255" key="3">
    <source>
        <dbReference type="PROSITE-ProRule" id="PRU01240"/>
    </source>
</evidence>
<evidence type="ECO:0000255" key="4">
    <source>
        <dbReference type="RuleBase" id="RU003355"/>
    </source>
</evidence>
<evidence type="ECO:0000256" key="5">
    <source>
        <dbReference type="SAM" id="MobiDB-lite"/>
    </source>
</evidence>
<evidence type="ECO:0000269" key="6">
    <source>
    </source>
</evidence>
<evidence type="ECO:0000269" key="7">
    <source>
    </source>
</evidence>
<evidence type="ECO:0000269" key="8">
    <source>
    </source>
</evidence>
<evidence type="ECO:0000269" key="9">
    <source>
    </source>
</evidence>
<evidence type="ECO:0000269" key="10">
    <source>
    </source>
</evidence>
<evidence type="ECO:0000303" key="11">
    <source>
    </source>
</evidence>
<evidence type="ECO:0000303" key="12">
    <source>
    </source>
</evidence>
<evidence type="ECO:0000303" key="13">
    <source>
    </source>
</evidence>
<evidence type="ECO:0000303" key="14">
    <source>
    </source>
</evidence>
<evidence type="ECO:0000303" key="15">
    <source>
    </source>
</evidence>
<evidence type="ECO:0000305" key="16"/>
<evidence type="ECO:0000312" key="17">
    <source>
        <dbReference type="EMBL" id="ACT76164.1"/>
    </source>
</evidence>
<evidence type="ECO:0000312" key="18">
    <source>
        <dbReference type="EMBL" id="CAG9475055.1"/>
    </source>
</evidence>
<evidence type="ECO:0000312" key="19">
    <source>
        <dbReference type="EMBL" id="SCO67822.1"/>
    </source>
</evidence>
<evidence type="ECO:0000312" key="20">
    <source>
        <dbReference type="EMBL" id="SCO73277.1"/>
    </source>
</evidence>
<evidence type="ECO:0000312" key="21">
    <source>
        <dbReference type="PDB" id="8COZ"/>
    </source>
</evidence>
<evidence type="ECO:0007744" key="22">
    <source>
        <dbReference type="PDB" id="4TR2"/>
    </source>
</evidence>
<evidence type="ECO:0007744" key="23">
    <source>
        <dbReference type="PDB" id="8COY"/>
    </source>
</evidence>
<evidence type="ECO:0007744" key="24">
    <source>
        <dbReference type="PDB" id="8COZ"/>
    </source>
</evidence>
<evidence type="ECO:0007744" key="25">
    <source>
        <dbReference type="PDB" id="8QKE"/>
    </source>
</evidence>
<evidence type="ECO:0007744" key="26">
    <source>
        <dbReference type="PDB" id="8QKG"/>
    </source>
</evidence>
<accession>E6Y8B9</accession>
<keyword id="KW-0002">3D-structure</keyword>
<keyword id="KW-0106">Calcium</keyword>
<keyword id="KW-1015">Disulfide bond</keyword>
<keyword id="KW-0325">Glycoprotein</keyword>
<keyword id="KW-0378">Hydrolase</keyword>
<keyword id="KW-0479">Metal-binding</keyword>
<keyword id="KW-0645">Protease</keyword>
<keyword id="KW-0964">Secreted</keyword>
<keyword id="KW-0720">Serine protease</keyword>
<keyword id="KW-0732">Signal</keyword>
<keyword id="KW-0865">Zymogen</keyword>
<comment type="function">
    <text evidence="1">Serine protease which plays an essential role in merozoite invasion of and egress from host erythrocytes by processing and activating various merozoite surface and parasitophorous vacuole proteins.</text>
</comment>
<comment type="catalytic activity">
    <reaction evidence="6 7 8 9 10">
        <text>Hydrolysis of proteins with broad specificity for peptide bonds, and a preference for a large uncharged residue in P1. Hydrolyzes peptide amides.</text>
        <dbReference type="EC" id="3.4.21.62"/>
    </reaction>
</comment>
<comment type="cofactor">
    <cofactor evidence="7">
        <name>Ca(2+)</name>
        <dbReference type="ChEBI" id="CHEBI:29108"/>
    </cofactor>
</comment>
<comment type="activity regulation">
    <text evidence="7 8 10">Inhibited by peptidic alpha-ketoamide inhibitors (PubMed:38503166). Inhibited by the alpha-ketoamide nonapeptide JMV5126 (isocaproyl-KITAQ(CO)DDEE-NH2) (PubMed:25204226). Inhibited by the alpha-ketoamide peptide MAM-117 (PubMed:37428845).</text>
</comment>
<comment type="biophysicochemical properties">
    <phDependence>
        <text evidence="9">Optimum pH is 7.0. Active from pH 6.0 to 8.5.</text>
    </phDependence>
</comment>
<comment type="subunit">
    <text evidence="6 7 9">Heterodimer between p54 form and prodomain p31; the interaction inhibits p54 catalytic activity (PubMed:23653352, PubMed:25204226). Heterodimer p31-p54 is monomeric at basic pH and dimeric at acidic pH; dimerization is driven by the N-terminal prodomain (p31) (PubMed:38386597).</text>
</comment>
<comment type="subcellular location">
    <subcellularLocation>
        <location evidence="1">Secreted</location>
    </subcellularLocation>
    <subcellularLocation>
        <location evidence="1">Parasitophorous vacuole lumen</location>
    </subcellularLocation>
    <text evidence="1">At the schizont stage, in merozoites, localizes to dense secretory granules called exonemes. Just prior to egress secreted into the parasitophorous vacuole.</text>
</comment>
<comment type="developmental stage">
    <text evidence="6">Expressed in segmented schizonts (at protein level) (PubMed:23653352). Expressed in free merozoites (PubMed:23653352).</text>
</comment>
<comment type="PTM">
    <text evidence="6 7 8">The prodomain (p31) is cleaved, probably by autocatalysis, and remains non-covalently associated with the p54 form as an inhibitor (PubMed:23653352, PubMed:25204226, PubMed:37428845). p54 is further cleaved into the p45/p47 forms (PubMed:23653352, PubMed:25204226, PubMed:37428845).</text>
</comment>
<comment type="PTM">
    <text evidence="8">The relevance of the N-glycosylation is not clear. In an insect expression system, SUB1 glycosylation appears to affect its processing into the active mature form suggesting that SUB1 may not be N-glycosylated in parasites.</text>
</comment>
<comment type="similarity">
    <text evidence="3 4">Belongs to the peptidase S8 family.</text>
</comment>
<gene>
    <name evidence="17" type="primary">sub1</name>
    <name evidence="20" type="ORF">PVC01_100035100</name>
    <name evidence="19" type="ORF">PVT01_100029100</name>
    <name evidence="18" type="ORF">PVW1_100050600</name>
</gene>
<sequence length="630" mass="69836">MVLTRRAALLLCPWVIQLVIKRTLAGDILPNEGKKEKDDVHKIISELRFLQKVETILESSNMSVSDVEADANAYNPDRDAPKEELQKLQDQQETPSKQPNNLRNSPQKRAEKKESPGKNKKSLRLIVSENHATSPSFFEESLLQEDVVSFIQSKGKLSNLKNLKSMIIDLNSDMTDEELAEYISLLERKGALIESDKLVGADDVSLASVKDAVRRGESSVNWGKLRSTMLEVPSGESPPSHAASSGSPFDDDDDLLSEAALHREEAHLAGSKTTKGYKFNDEYRNLQWGLDLARLDETQDLINANRVSVTKICVIDSGIDYNHPDLRNNIDVNVKELHGRKGVDDDSNGVVDDVYGANFVNNSGDPMDDNYHGTHVSGIISAVGNNGIGIVGVDGHSKLVICKALDQHKLGRLGDMFKCIDYCISRQAHMINGSFSFDEYSNIFNASVEHLRSLGILFFVSASNCAHDKLSKPDIAKCDLAVNHRYPPILSKTHNNVIAVANLKRDLDESYSLSVNSFYSNIYCQLAAPGTNIYSTTPMNNYRKLNGTSMASPHVAAIASIVRSINPNLTYLQIVEILRNAIVKLPSLTERVSWGGYVDILRAVNLAIDSKAAPYIKSHSWFRWKQGSRR</sequence>
<feature type="signal peptide" evidence="2">
    <location>
        <begin position="1"/>
        <end position="25"/>
    </location>
</feature>
<feature type="propeptide" id="PRO_0000461925" description="Inhibition peptide" evidence="6 7 8">
    <location>
        <begin position="26"/>
        <end position="202"/>
    </location>
</feature>
<feature type="chain" id="PRO_5010962134" description="Subtilisin-like protease 1" evidence="16">
    <location>
        <begin position="203"/>
        <end position="630"/>
    </location>
</feature>
<feature type="domain" description="Peptidase S8" evidence="3">
    <location>
        <begin position="287"/>
        <end position="604"/>
    </location>
</feature>
<feature type="region of interest" description="Disordered" evidence="5">
    <location>
        <begin position="72"/>
        <end position="125"/>
    </location>
</feature>
<feature type="region of interest" description="Disordered" evidence="5">
    <location>
        <begin position="230"/>
        <end position="254"/>
    </location>
</feature>
<feature type="compositionally biased region" description="Basic and acidic residues" evidence="5">
    <location>
        <begin position="76"/>
        <end position="87"/>
    </location>
</feature>
<feature type="compositionally biased region" description="Polar residues" evidence="5">
    <location>
        <begin position="94"/>
        <end position="107"/>
    </location>
</feature>
<feature type="compositionally biased region" description="Basic and acidic residues" evidence="5">
    <location>
        <begin position="108"/>
        <end position="117"/>
    </location>
</feature>
<feature type="compositionally biased region" description="Low complexity" evidence="5">
    <location>
        <begin position="233"/>
        <end position="248"/>
    </location>
</feature>
<feature type="active site" description="Charge relay system" evidence="3">
    <location>
        <position position="316"/>
    </location>
</feature>
<feature type="active site" description="Charge relay system" evidence="3">
    <location>
        <position position="372"/>
    </location>
</feature>
<feature type="active site" description="Charge relay system" evidence="3">
    <location>
        <position position="549"/>
    </location>
</feature>
<feature type="binding site" evidence="7 22">
    <location>
        <position position="129"/>
    </location>
    <ligand>
        <name>Ca(2+)</name>
        <dbReference type="ChEBI" id="CHEBI:29108"/>
        <label>1</label>
    </ligand>
</feature>
<feature type="binding site" evidence="7 22">
    <location>
        <position position="130"/>
    </location>
    <ligand>
        <name>Ca(2+)</name>
        <dbReference type="ChEBI" id="CHEBI:29108"/>
        <label>1</label>
    </ligand>
</feature>
<feature type="binding site" evidence="7 22">
    <location>
        <position position="133"/>
    </location>
    <ligand>
        <name>Ca(2+)</name>
        <dbReference type="ChEBI" id="CHEBI:29108"/>
        <label>1</label>
    </ligand>
</feature>
<feature type="binding site" evidence="7 22">
    <location>
        <position position="135"/>
    </location>
    <ligand>
        <name>Ca(2+)</name>
        <dbReference type="ChEBI" id="CHEBI:29108"/>
        <label>1</label>
    </ligand>
</feature>
<feature type="binding site" evidence="7 22">
    <location>
        <position position="190"/>
    </location>
    <ligand>
        <name>Ca(2+)</name>
        <dbReference type="ChEBI" id="CHEBI:29108"/>
        <label>1</label>
    </ligand>
</feature>
<feature type="binding site" evidence="7 8 10 22 23 24 25 26">
    <location>
        <position position="281"/>
    </location>
    <ligand>
        <name>Ca(2+)</name>
        <dbReference type="ChEBI" id="CHEBI:29108"/>
        <label>2</label>
    </ligand>
</feature>
<feature type="binding site" evidence="7 8 10 22 23 24 25 26">
    <location>
        <position position="325"/>
    </location>
    <ligand>
        <name>Ca(2+)</name>
        <dbReference type="ChEBI" id="CHEBI:29108"/>
        <label>2</label>
    </ligand>
</feature>
<feature type="binding site" evidence="7 8 10 22 23 24 25 26">
    <location>
        <position position="336"/>
    </location>
    <ligand>
        <name>Ca(2+)</name>
        <dbReference type="ChEBI" id="CHEBI:29108"/>
        <label>3</label>
    </ligand>
</feature>
<feature type="binding site" evidence="7 8 10 22 23 24 25 26">
    <location>
        <position position="336"/>
    </location>
    <ligand>
        <name>Ca(2+)</name>
        <dbReference type="ChEBI" id="CHEBI:29108"/>
        <label>4</label>
    </ligand>
</feature>
<feature type="binding site" evidence="7 8 10 22 23 24 25 26">
    <location>
        <position position="340"/>
    </location>
    <ligand>
        <name>Ca(2+)</name>
        <dbReference type="ChEBI" id="CHEBI:29108"/>
        <label>3</label>
    </ligand>
</feature>
<feature type="binding site" evidence="7 8 10 22 23 24 25 26">
    <location>
        <position position="343"/>
    </location>
    <ligand>
        <name>Ca(2+)</name>
        <dbReference type="ChEBI" id="CHEBI:29108"/>
        <label>3</label>
    </ligand>
</feature>
<feature type="binding site" evidence="7 8 10 22 23 24 25 26">
    <location>
        <position position="344"/>
    </location>
    <ligand>
        <name>Ca(2+)</name>
        <dbReference type="ChEBI" id="CHEBI:29108"/>
        <label>4</label>
    </ligand>
</feature>
<feature type="binding site" evidence="7 8 10 22 23 24 25 26">
    <location>
        <position position="345"/>
    </location>
    <ligand>
        <name>Ca(2+)</name>
        <dbReference type="ChEBI" id="CHEBI:29108"/>
        <label>3</label>
    </ligand>
</feature>
<feature type="binding site" evidence="7 8 10 22 23 24 25 26">
    <location>
        <position position="346"/>
    </location>
    <ligand>
        <name>Ca(2+)</name>
        <dbReference type="ChEBI" id="CHEBI:29108"/>
        <label>4</label>
    </ligand>
</feature>
<feature type="binding site" evidence="7 8 10 22 23 24 25 26">
    <location>
        <position position="348"/>
    </location>
    <ligand>
        <name>Ca(2+)</name>
        <dbReference type="ChEBI" id="CHEBI:29108"/>
        <label>4</label>
    </ligand>
</feature>
<feature type="binding site" evidence="7 8 10 22 23 24 25 26">
    <location>
        <position position="350"/>
    </location>
    <ligand>
        <name>Ca(2+)</name>
        <dbReference type="ChEBI" id="CHEBI:29108"/>
        <label>4</label>
    </ligand>
</feature>
<feature type="binding site" evidence="7 8 10 22 23 24 25 26">
    <location>
        <position position="352"/>
    </location>
    <ligand>
        <name>Ca(2+)</name>
        <dbReference type="ChEBI" id="CHEBI:29108"/>
        <label>3</label>
    </ligand>
</feature>
<feature type="binding site" evidence="7 8 10 22 23 24 25 26">
    <location>
        <position position="353"/>
    </location>
    <ligand>
        <name>Ca(2+)</name>
        <dbReference type="ChEBI" id="CHEBI:29108"/>
        <label>4</label>
    </ligand>
</feature>
<feature type="binding site" evidence="7 8 10 22 23 24 25 26">
    <location>
        <position position="383"/>
    </location>
    <ligand>
        <name>Ca(2+)</name>
        <dbReference type="ChEBI" id="CHEBI:29108"/>
        <label>2</label>
    </ligand>
</feature>
<feature type="binding site" evidence="7 8 10 22 23 24 26">
    <location>
        <position position="386"/>
    </location>
    <ligand>
        <name>Ca(2+)</name>
        <dbReference type="ChEBI" id="CHEBI:29108"/>
        <label>2</label>
    </ligand>
</feature>
<feature type="binding site" evidence="7 8 10 22 23 24 25 26">
    <location>
        <position position="388"/>
    </location>
    <ligand>
        <name>Ca(2+)</name>
        <dbReference type="ChEBI" id="CHEBI:29108"/>
        <label>2</label>
    </ligand>
</feature>
<feature type="binding site" evidence="7 8 10 22 23 24 25 26">
    <location>
        <position position="390"/>
    </location>
    <ligand>
        <name>Ca(2+)</name>
        <dbReference type="ChEBI" id="CHEBI:29108"/>
        <label>2</label>
    </ligand>
</feature>
<feature type="site" description="Cleavage" evidence="6 7 8">
    <location>
        <begin position="202"/>
        <end position="203"/>
    </location>
</feature>
<feature type="site" description="Cleavage" evidence="6 8">
    <location>
        <begin position="243"/>
        <end position="244"/>
    </location>
</feature>
<feature type="site" description="Cleavage" evidence="6">
    <location>
        <begin position="270"/>
        <end position="271"/>
    </location>
</feature>
<feature type="site" description="Cleavage" evidence="8">
    <location>
        <begin position="357"/>
        <end position="358"/>
    </location>
</feature>
<feature type="glycosylation site" description="N-linked (GlcNAc...) asparagine" evidence="8 10 23 24 25 26">
    <location>
        <position position="546"/>
    </location>
</feature>
<feature type="disulfide bond" evidence="7 8 10 21 22 23 25 26">
    <location>
        <begin position="313"/>
        <end position="423"/>
    </location>
</feature>
<feature type="disulfide bond" evidence="7 8 10 21 22 23 25 26">
    <location>
        <begin position="402"/>
        <end position="419"/>
    </location>
</feature>
<feature type="disulfide bond" evidence="7 8 10 21 22 23 25 26">
    <location>
        <begin position="465"/>
        <end position="478"/>
    </location>
</feature>
<feature type="mutagenesis site" description="Results in the loss of one or more N-glycosylation sites, improves the production yield in insect cells and promotes enzymatic activity; when associated with S-432 and S-445." evidence="8">
    <original>N</original>
    <variation>S</variation>
    <location>
        <position position="361"/>
    </location>
</feature>
<feature type="mutagenesis site" description="Results in the loss of one or more N-glycosylation sites, improves the production yield in insect cells and promotes enzymatic activity; when associated with S-361 and S-445." evidence="8">
    <original>N</original>
    <variation>S</variation>
    <location>
        <position position="432"/>
    </location>
</feature>
<feature type="mutagenesis site" description="Results in the loss of one or more N-glycosylation sites, improves the production yield in insect cells and promotes enzymatic activity; when associated with S-361 and S-432." evidence="8">
    <original>N</original>
    <variation>S</variation>
    <location>
        <position position="445"/>
    </location>
</feature>
<organism evidence="17">
    <name type="scientific">Plasmodium vivax</name>
    <dbReference type="NCBI Taxonomy" id="5855"/>
    <lineage>
        <taxon>Eukaryota</taxon>
        <taxon>Sar</taxon>
        <taxon>Alveolata</taxon>
        <taxon>Apicomplexa</taxon>
        <taxon>Aconoidasida</taxon>
        <taxon>Haemosporida</taxon>
        <taxon>Plasmodiidae</taxon>
        <taxon>Plasmodium</taxon>
        <taxon>Plasmodium (Plasmodium)</taxon>
    </lineage>
</organism>
<proteinExistence type="evidence at protein level"/>
<reference evidence="17" key="1">
    <citation type="submission" date="2008-12" db="EMBL/GenBank/DDBJ databases">
        <title>Plasmodium vivax subtilisin-like 1 protease.</title>
        <authorList>
            <person name="Barale J.-C."/>
        </authorList>
    </citation>
    <scope>NUCLEOTIDE SEQUENCE [GENOMIC DNA]</scope>
    <source>
        <strain evidence="17">Belem</strain>
    </source>
</reference>
<reference evidence="18" key="2">
    <citation type="submission" date="2021-09" db="EMBL/GenBank/DDBJ databases">
        <authorList>
            <consortium name="Pathogen Informatics"/>
        </authorList>
    </citation>
    <scope>NUCLEOTIDE SEQUENCE [GENOMIC DNA]</scope>
    <source>
        <strain evidence="18">PvW1</strain>
    </source>
</reference>
<reference evidence="16" key="3">
    <citation type="journal article" date="2013" name="J. Biol. Chem.">
        <title>In Silico screening on the three-dimensional model of the Plasmodium vivax SUB1 protease leads to the validation of a novel anti-parasite compound.</title>
        <authorList>
            <person name="Bouillon A."/>
            <person name="Giganti D."/>
            <person name="Benedet C."/>
            <person name="Gorgette O."/>
            <person name="Petres S."/>
            <person name="Crublet E."/>
            <person name="Girard-Blanc C."/>
            <person name="Witkowski B."/>
            <person name="Menard D."/>
            <person name="Nilges M."/>
            <person name="Mercereau-Puijalon O."/>
            <person name="Stoven V."/>
            <person name="Barale J.C."/>
        </authorList>
    </citation>
    <scope>CATALYTIC ACTIVITY</scope>
    <scope>SUBUNIT</scope>
    <scope>DEVELOPMENTAL STAGE</scope>
    <scope>PROTEOLYTIC CLEAVAGE</scope>
    <scope>CLEAVAGE SITES</scope>
</reference>
<reference evidence="16" key="4">
    <citation type="journal article" date="2024" name="MBio">
        <title>Prodomain-driven enzyme dimerization: a pH-dependent autoinhibition mechanism that controls Plasmodium Sub1 activity before merozoite egress.</title>
        <authorList>
            <person name="Martinez M."/>
            <person name="Bouillon A."/>
            <person name="Brule S."/>
            <person name="Raynal B."/>
            <person name="Haouz A."/>
            <person name="Alzari P.M."/>
            <person name="Barale J.C."/>
        </authorList>
    </citation>
    <scope>CATALYTIC ACTIVITY</scope>
    <scope>BIOPHYSICOCHEMICAL PROPERTIES</scope>
    <scope>SUBUNIT</scope>
</reference>
<reference evidence="22" key="5">
    <citation type="journal article" date="2014" name="Nat. Commun.">
        <title>A novel Plasmodium-specific prodomain fold regulates the malaria drug target SUB1 subtilase.</title>
        <authorList>
            <person name="Giganti D."/>
            <person name="Bouillon A."/>
            <person name="Tawk L."/>
            <person name="Robert F."/>
            <person name="Martinez M."/>
            <person name="Crublet E."/>
            <person name="Weber P."/>
            <person name="Girard-Blanc C."/>
            <person name="Petres S."/>
            <person name="Haouz A."/>
            <person name="Hernandez J.F."/>
            <person name="Mercereau-Puijalon O."/>
            <person name="Alzari P.M."/>
            <person name="Barale J.C."/>
        </authorList>
    </citation>
    <scope>X-RAY CRYSTALLOGRAPHY (2.70 ANGSTROMS) OF 26-630 IN COMPLEX WITH CALCIUM</scope>
    <scope>CATALYTIC ACTIVITY</scope>
    <scope>COFACTOR</scope>
    <scope>ACTIVITY REGULATION</scope>
    <scope>SUBUNIT</scope>
    <scope>PROTEOLYTIC CLEAVAGE</scope>
    <scope>CLEAVAGE SITE</scope>
    <scope>DISULFIDE BONDS</scope>
</reference>
<reference evidence="23 24" key="6">
    <citation type="journal article" date="2023" name="Acta Crystallogr. D Struct. Biol.">
        <title>3D structures of the Plasmodium vivax subtilisin-like drug target SUB1 reveal conformational changes to accommodate a substrate-derived alpha-ketoamide inhibitor.</title>
        <authorList>
            <person name="Martinez M."/>
            <person name="Batista F.A."/>
            <person name="Maurel M."/>
            <person name="Bouillon A."/>
            <person name="Ortega Varga L."/>
            <person name="Wehenkel A.M."/>
            <person name="Le Chevalier-Sontag L."/>
            <person name="Blondel A."/>
            <person name="Haouz A."/>
            <person name="Hernandez J.F."/>
            <person name="Alzari P.M."/>
            <person name="Barale J.C."/>
        </authorList>
    </citation>
    <scope>X-RAY CRYSTALLOGRAPHY (1.44 ANGSTROMS) OF 273-617 IN COMPLEX WITH CA(2+) AND PEPTIDE INHIBITOR</scope>
    <scope>CATALYTIC ACTIVITY</scope>
    <scope>ACTIVITY REGULATION</scope>
    <scope>PROTEOLYTIC CLEAVAGE</scope>
    <scope>GLYCOSYLATION</scope>
    <scope>GLYCOSYLATION AT ASN-546</scope>
    <scope>DISULFIDE BONDS</scope>
    <scope>MUTAGENESIS OF ASN-361; ASN-432 AND ASN-445</scope>
</reference>
<reference evidence="25 26" key="7">
    <citation type="journal article" date="2024" name="Eur. J. Med. Chem.">
        <title>Insights from structure-activity relationships and the binding mode of peptidic alpha-ketoamide inhibitors of the malaria drug target subtilisin-like SUB1.</title>
        <authorList>
            <person name="Legru A."/>
            <person name="Batista F.A."/>
            <person name="Puszko A.K."/>
            <person name="Bouillon A."/>
            <person name="Maurel M."/>
            <person name="Martinez M."/>
            <person name="Ejjoummany A."/>
            <person name="Ortega Varga L."/>
            <person name="Adler P."/>
            <person name="Mechaly A."/>
            <person name="Hadjadj M."/>
            <person name="Sosnowski P."/>
            <person name="Hopfgartner G."/>
            <person name="Alzari P.M."/>
            <person name="Blondel A."/>
            <person name="Haouz A."/>
            <person name="Barale J.C."/>
            <person name="Hernandez J.F."/>
        </authorList>
    </citation>
    <scope>X-RAY CRYSTALLOGRAPHY (1.50 ANGSTROMS) OF 26-630 IN COMPLEX WITH CA(2+) AND PEPTIDE INHIBITORS</scope>
    <scope>CATALYTIC ACTIVITY</scope>
    <scope>ACTIVITY REGULATION</scope>
    <scope>GLYCOSYLATION AT ASN-546</scope>
    <scope>DISULFIDE BONDS</scope>
</reference>
<dbReference type="EC" id="3.4.21.62" evidence="6 7 8 9 10"/>
<dbReference type="EMBL" id="FJ536584">
    <property type="protein sequence ID" value="ACT76164.1"/>
    <property type="molecule type" value="Genomic_DNA"/>
</dbReference>
<dbReference type="EMBL" id="CAJZCX010000005">
    <property type="protein sequence ID" value="CAG9475055.1"/>
    <property type="molecule type" value="Genomic_DNA"/>
</dbReference>
<dbReference type="EMBL" id="LT615248">
    <property type="protein sequence ID" value="SCO67822.1"/>
    <property type="molecule type" value="Genomic_DNA"/>
</dbReference>
<dbReference type="EMBL" id="LT615265">
    <property type="protein sequence ID" value="SCO73277.1"/>
    <property type="molecule type" value="Genomic_DNA"/>
</dbReference>
<dbReference type="PDB" id="4TR2">
    <property type="method" value="X-ray"/>
    <property type="resolution" value="2.70 A"/>
    <property type="chains" value="A/B=26-630"/>
</dbReference>
<dbReference type="PDB" id="8COY">
    <property type="method" value="X-ray"/>
    <property type="resolution" value="1.51 A"/>
    <property type="chains" value="A/B=273-617"/>
</dbReference>
<dbReference type="PDB" id="8COZ">
    <property type="method" value="X-ray"/>
    <property type="resolution" value="1.44 A"/>
    <property type="chains" value="A/B=273-617"/>
</dbReference>
<dbReference type="PDB" id="8CP0">
    <property type="method" value="X-ray"/>
    <property type="resolution" value="3.25 A"/>
    <property type="chains" value="A=244-630"/>
</dbReference>
<dbReference type="PDB" id="8QKE">
    <property type="method" value="X-ray"/>
    <property type="resolution" value="1.50 A"/>
    <property type="chains" value="A/B=26-630"/>
</dbReference>
<dbReference type="PDB" id="8QKG">
    <property type="method" value="X-ray"/>
    <property type="resolution" value="1.54 A"/>
    <property type="chains" value="A/B=26-630"/>
</dbReference>
<dbReference type="PDB" id="8QKJ">
    <property type="method" value="X-ray"/>
    <property type="resolution" value="1.77 A"/>
    <property type="chains" value="A/B=26-630"/>
</dbReference>
<dbReference type="PDBsum" id="4TR2"/>
<dbReference type="PDBsum" id="8COY"/>
<dbReference type="PDBsum" id="8COZ"/>
<dbReference type="PDBsum" id="8CP0"/>
<dbReference type="PDBsum" id="8QKE"/>
<dbReference type="PDBsum" id="8QKG"/>
<dbReference type="PDBsum" id="8QKJ"/>
<dbReference type="SMR" id="E6Y8B9"/>
<dbReference type="MEROPS" id="S08.012"/>
<dbReference type="VEuPathDB" id="PlasmoDB:PVP01_1026500"/>
<dbReference type="VEuPathDB" id="PlasmoDB:PVPAM_100032900"/>
<dbReference type="VEuPathDB" id="PlasmoDB:PVW1_100050600"/>
<dbReference type="VEuPathDB" id="PlasmoDB:PVX_097935"/>
<dbReference type="eggNOG" id="KOG1153">
    <property type="taxonomic scope" value="Eukaryota"/>
</dbReference>
<dbReference type="HOGENOM" id="CLU_455979_0_0_1"/>
<dbReference type="Proteomes" id="UP000196402">
    <property type="component" value="Chromosome 10"/>
</dbReference>
<dbReference type="Proteomes" id="UP000305196">
    <property type="component" value="Chromosome 10"/>
</dbReference>
<dbReference type="Proteomes" id="UP000779233">
    <property type="component" value="Unassembled WGS sequence"/>
</dbReference>
<dbReference type="GO" id="GO:0005576">
    <property type="term" value="C:extracellular region"/>
    <property type="evidence" value="ECO:0007669"/>
    <property type="project" value="UniProtKB-SubCell"/>
</dbReference>
<dbReference type="GO" id="GO:0046872">
    <property type="term" value="F:metal ion binding"/>
    <property type="evidence" value="ECO:0007669"/>
    <property type="project" value="UniProtKB-KW"/>
</dbReference>
<dbReference type="GO" id="GO:0004252">
    <property type="term" value="F:serine-type endopeptidase activity"/>
    <property type="evidence" value="ECO:0007669"/>
    <property type="project" value="UniProtKB-UniRule"/>
</dbReference>
<dbReference type="GO" id="GO:0006508">
    <property type="term" value="P:proteolysis"/>
    <property type="evidence" value="ECO:0007669"/>
    <property type="project" value="UniProtKB-KW"/>
</dbReference>
<dbReference type="CDD" id="cd07473">
    <property type="entry name" value="Peptidases_S8_Subtilisin_like"/>
    <property type="match status" value="1"/>
</dbReference>
<dbReference type="Gene3D" id="3.30.70.2380">
    <property type="match status" value="1"/>
</dbReference>
<dbReference type="Gene3D" id="3.40.50.200">
    <property type="entry name" value="Peptidase S8/S53 domain"/>
    <property type="match status" value="1"/>
</dbReference>
<dbReference type="InterPro" id="IPR000209">
    <property type="entry name" value="Peptidase_S8/S53_dom"/>
</dbReference>
<dbReference type="InterPro" id="IPR036852">
    <property type="entry name" value="Peptidase_S8/S53_dom_sf"/>
</dbReference>
<dbReference type="InterPro" id="IPR051048">
    <property type="entry name" value="Peptidase_S8/S53_subtilisin"/>
</dbReference>
<dbReference type="InterPro" id="IPR023827">
    <property type="entry name" value="Peptidase_S8_Asp-AS"/>
</dbReference>
<dbReference type="InterPro" id="IPR022398">
    <property type="entry name" value="Peptidase_S8_His-AS"/>
</dbReference>
<dbReference type="InterPro" id="IPR023828">
    <property type="entry name" value="Peptidase_S8_Ser-AS"/>
</dbReference>
<dbReference type="InterPro" id="IPR015500">
    <property type="entry name" value="Peptidase_S8_subtilisin-rel"/>
</dbReference>
<dbReference type="InterPro" id="IPR034204">
    <property type="entry name" value="PfSUB1-like_cat_dom"/>
</dbReference>
<dbReference type="InterPro" id="IPR041089">
    <property type="entry name" value="SUB1_ProdP9"/>
</dbReference>
<dbReference type="PANTHER" id="PTHR43399:SF4">
    <property type="entry name" value="CELL WALL-ASSOCIATED PROTEASE"/>
    <property type="match status" value="1"/>
</dbReference>
<dbReference type="PANTHER" id="PTHR43399">
    <property type="entry name" value="SUBTILISIN-RELATED"/>
    <property type="match status" value="1"/>
</dbReference>
<dbReference type="Pfam" id="PF00082">
    <property type="entry name" value="Peptidase_S8"/>
    <property type="match status" value="1"/>
</dbReference>
<dbReference type="Pfam" id="PF18213">
    <property type="entry name" value="SUB1_ProdP9"/>
    <property type="match status" value="1"/>
</dbReference>
<dbReference type="PRINTS" id="PR00723">
    <property type="entry name" value="SUBTILISIN"/>
</dbReference>
<dbReference type="SUPFAM" id="SSF52743">
    <property type="entry name" value="Subtilisin-like"/>
    <property type="match status" value="1"/>
</dbReference>
<dbReference type="PROSITE" id="PS51892">
    <property type="entry name" value="SUBTILASE"/>
    <property type="match status" value="1"/>
</dbReference>
<dbReference type="PROSITE" id="PS00136">
    <property type="entry name" value="SUBTILASE_ASP"/>
    <property type="match status" value="1"/>
</dbReference>
<dbReference type="PROSITE" id="PS00137">
    <property type="entry name" value="SUBTILASE_HIS"/>
    <property type="match status" value="1"/>
</dbReference>
<dbReference type="PROSITE" id="PS00138">
    <property type="entry name" value="SUBTILASE_SER"/>
    <property type="match status" value="1"/>
</dbReference>
<protein>
    <recommendedName>
        <fullName evidence="13 14 15">Subtilisin-like protease 1</fullName>
        <ecNumber evidence="6 7 8 9 10">3.4.21.62</ecNumber>
    </recommendedName>
    <alternativeName>
        <fullName evidence="13 14 15">PvS1</fullName>
    </alternativeName>
    <alternativeName>
        <fullName evidence="11 12">PvSUB1</fullName>
    </alternativeName>
    <alternativeName>
        <fullName evidence="15">SUB1 protease</fullName>
    </alternativeName>
    <alternativeName>
        <fullName evidence="12">Subtilase SUB1</fullName>
    </alternativeName>
</protein>